<proteinExistence type="inferred from homology"/>
<evidence type="ECO:0000255" key="1">
    <source>
        <dbReference type="HAMAP-Rule" id="MF_00008"/>
    </source>
</evidence>
<name>TYSY_BACMO</name>
<feature type="chain" id="PRO_0000140928" description="Thymidylate synthase">
    <location>
        <begin position="1"/>
        <end position="279"/>
    </location>
</feature>
<feature type="active site" description="Nucleophile" evidence="1">
    <location>
        <position position="161"/>
    </location>
</feature>
<feature type="binding site" evidence="1">
    <location>
        <begin position="141"/>
        <end position="142"/>
    </location>
    <ligand>
        <name>dUMP</name>
        <dbReference type="ChEBI" id="CHEBI:246422"/>
        <note>ligand shared between dimeric partners</note>
    </ligand>
</feature>
<feature type="binding site" description="in other chain" evidence="1">
    <location>
        <begin position="181"/>
        <end position="184"/>
    </location>
    <ligand>
        <name>dUMP</name>
        <dbReference type="ChEBI" id="CHEBI:246422"/>
        <note>ligand shared between dimeric partners</note>
    </ligand>
</feature>
<feature type="binding site" evidence="1">
    <location>
        <position position="184"/>
    </location>
    <ligand>
        <name>(6R)-5,10-methylene-5,6,7,8-tetrahydrofolate</name>
        <dbReference type="ChEBI" id="CHEBI:15636"/>
    </ligand>
</feature>
<feature type="binding site" description="in other chain" evidence="1">
    <location>
        <position position="192"/>
    </location>
    <ligand>
        <name>dUMP</name>
        <dbReference type="ChEBI" id="CHEBI:246422"/>
        <note>ligand shared between dimeric partners</note>
    </ligand>
</feature>
<feature type="binding site" description="in other chain" evidence="1">
    <location>
        <begin position="222"/>
        <end position="224"/>
    </location>
    <ligand>
        <name>dUMP</name>
        <dbReference type="ChEBI" id="CHEBI:246422"/>
        <note>ligand shared between dimeric partners</note>
    </ligand>
</feature>
<feature type="binding site" evidence="1">
    <location>
        <position position="278"/>
    </location>
    <ligand>
        <name>(6R)-5,10-methylene-5,6,7,8-tetrahydrofolate</name>
        <dbReference type="ChEBI" id="CHEBI:15636"/>
    </ligand>
</feature>
<protein>
    <recommendedName>
        <fullName evidence="1">Thymidylate synthase</fullName>
        <shortName evidence="1">TS</shortName>
        <shortName evidence="1">TSase</shortName>
        <ecNumber evidence="1">2.1.1.45</ecNumber>
    </recommendedName>
</protein>
<accession>Q9ANR7</accession>
<comment type="function">
    <text evidence="1">Catalyzes the reductive methylation of 2'-deoxyuridine-5'-monophosphate (dUMP) to 2'-deoxythymidine-5'-monophosphate (dTMP) while utilizing 5,10-methylenetetrahydrofolate (mTHF) as the methyl donor and reductant in the reaction, yielding dihydrofolate (DHF) as a by-product. This enzymatic reaction provides an intracellular de novo source of dTMP, an essential precursor for DNA biosynthesis.</text>
</comment>
<comment type="catalytic activity">
    <reaction evidence="1">
        <text>dUMP + (6R)-5,10-methylene-5,6,7,8-tetrahydrofolate = 7,8-dihydrofolate + dTMP</text>
        <dbReference type="Rhea" id="RHEA:12104"/>
        <dbReference type="ChEBI" id="CHEBI:15636"/>
        <dbReference type="ChEBI" id="CHEBI:57451"/>
        <dbReference type="ChEBI" id="CHEBI:63528"/>
        <dbReference type="ChEBI" id="CHEBI:246422"/>
        <dbReference type="EC" id="2.1.1.45"/>
    </reaction>
</comment>
<comment type="pathway">
    <text evidence="1">Pyrimidine metabolism; dTTP biosynthesis.</text>
</comment>
<comment type="subunit">
    <text evidence="1">Homodimer.</text>
</comment>
<comment type="subcellular location">
    <subcellularLocation>
        <location evidence="1">Cytoplasm</location>
    </subcellularLocation>
</comment>
<comment type="similarity">
    <text evidence="1">Belongs to the thymidylate synthase family. Bacterial-type ThyA subfamily.</text>
</comment>
<organism>
    <name type="scientific">Bacillus mojavensis</name>
    <dbReference type="NCBI Taxonomy" id="72360"/>
    <lineage>
        <taxon>Bacteria</taxon>
        <taxon>Bacillati</taxon>
        <taxon>Bacillota</taxon>
        <taxon>Bacilli</taxon>
        <taxon>Bacillales</taxon>
        <taxon>Bacillaceae</taxon>
        <taxon>Bacillus</taxon>
    </lineage>
</organism>
<keyword id="KW-0963">Cytoplasm</keyword>
<keyword id="KW-0489">Methyltransferase</keyword>
<keyword id="KW-0545">Nucleotide biosynthesis</keyword>
<keyword id="KW-0808">Transferase</keyword>
<reference key="1">
    <citation type="journal article" date="2001" name="Proc. Natl. Acad. Sci. U.S.A.">
        <title>Related homing endonucleases I-BmoI and I-TevI use different strategies to cleave homologous recognition sites.</title>
        <authorList>
            <person name="Edgell D.R."/>
            <person name="Shub D.A."/>
        </authorList>
    </citation>
    <scope>NUCLEOTIDE SEQUENCE [GENOMIC DNA]</scope>
    <source>
        <strain>s87-18</strain>
    </source>
</reference>
<sequence>MTQFDKQYNSIIKEIIKNGISDEEFDVRTKWESDGTPAHTLSIITKQMRFDNSEVPILTTKKVAWKTAIKELLWIWQLKSNDVTELNKMGVHIWDQWKQEDGSIGHAYGFQLAKKNRNLNGEKVDQVDYLLHQLKNNPSSRRHITMLWNPDELDSMALTPCVYETQWYVKQGKLHLEVRARSNDMALGNPFNVFQYNVLQRMIAQVTGYELGEYIFNIGDCHVYTRHIDNLKIQMEREQFEAPKLWINPEVKDFYDFTIDDFKLINYKHGDRLSFEVAV</sequence>
<dbReference type="EC" id="2.1.1.45" evidence="1"/>
<dbReference type="EMBL" id="AF321518">
    <property type="protein sequence ID" value="AAK09364.1"/>
    <property type="molecule type" value="Genomic_DNA"/>
</dbReference>
<dbReference type="SMR" id="Q9ANR7"/>
<dbReference type="UniPathway" id="UPA00575"/>
<dbReference type="GO" id="GO:0005829">
    <property type="term" value="C:cytosol"/>
    <property type="evidence" value="ECO:0007669"/>
    <property type="project" value="TreeGrafter"/>
</dbReference>
<dbReference type="GO" id="GO:0004799">
    <property type="term" value="F:thymidylate synthase activity"/>
    <property type="evidence" value="ECO:0007669"/>
    <property type="project" value="UniProtKB-UniRule"/>
</dbReference>
<dbReference type="GO" id="GO:0006231">
    <property type="term" value="P:dTMP biosynthetic process"/>
    <property type="evidence" value="ECO:0007669"/>
    <property type="project" value="UniProtKB-UniRule"/>
</dbReference>
<dbReference type="GO" id="GO:0006235">
    <property type="term" value="P:dTTP biosynthetic process"/>
    <property type="evidence" value="ECO:0007669"/>
    <property type="project" value="UniProtKB-UniRule"/>
</dbReference>
<dbReference type="GO" id="GO:0032259">
    <property type="term" value="P:methylation"/>
    <property type="evidence" value="ECO:0007669"/>
    <property type="project" value="UniProtKB-KW"/>
</dbReference>
<dbReference type="CDD" id="cd00351">
    <property type="entry name" value="TS_Pyrimidine_HMase"/>
    <property type="match status" value="1"/>
</dbReference>
<dbReference type="FunFam" id="3.30.572.10:FF:000010">
    <property type="entry name" value="Thymidylate synthase 1"/>
    <property type="match status" value="1"/>
</dbReference>
<dbReference type="Gene3D" id="3.30.572.10">
    <property type="entry name" value="Thymidylate synthase/dCMP hydroxymethylase domain"/>
    <property type="match status" value="1"/>
</dbReference>
<dbReference type="HAMAP" id="MF_00008">
    <property type="entry name" value="Thymidy_synth_bact"/>
    <property type="match status" value="1"/>
</dbReference>
<dbReference type="InterPro" id="IPR045097">
    <property type="entry name" value="Thymidate_synth/dCMP_Mease"/>
</dbReference>
<dbReference type="InterPro" id="IPR023451">
    <property type="entry name" value="Thymidate_synth/dCMP_Mease_dom"/>
</dbReference>
<dbReference type="InterPro" id="IPR036926">
    <property type="entry name" value="Thymidate_synth/dCMP_Mease_sf"/>
</dbReference>
<dbReference type="InterPro" id="IPR000398">
    <property type="entry name" value="Thymidylate_synthase"/>
</dbReference>
<dbReference type="InterPro" id="IPR020940">
    <property type="entry name" value="Thymidylate_synthase_AS"/>
</dbReference>
<dbReference type="NCBIfam" id="NF002495">
    <property type="entry name" value="PRK01827.1-1"/>
    <property type="match status" value="1"/>
</dbReference>
<dbReference type="NCBIfam" id="TIGR03284">
    <property type="entry name" value="thym_sym"/>
    <property type="match status" value="1"/>
</dbReference>
<dbReference type="PANTHER" id="PTHR11548">
    <property type="entry name" value="THYMIDYLATE SYNTHASE 1"/>
    <property type="match status" value="1"/>
</dbReference>
<dbReference type="PANTHER" id="PTHR11548:SF1">
    <property type="entry name" value="THYMIDYLATE SYNTHASE 1"/>
    <property type="match status" value="1"/>
</dbReference>
<dbReference type="Pfam" id="PF00303">
    <property type="entry name" value="Thymidylat_synt"/>
    <property type="match status" value="1"/>
</dbReference>
<dbReference type="PRINTS" id="PR00108">
    <property type="entry name" value="THYMDSNTHASE"/>
</dbReference>
<dbReference type="SUPFAM" id="SSF55831">
    <property type="entry name" value="Thymidylate synthase/dCMP hydroxymethylase"/>
    <property type="match status" value="1"/>
</dbReference>
<dbReference type="PROSITE" id="PS00091">
    <property type="entry name" value="THYMIDYLATE_SYNTHASE"/>
    <property type="match status" value="1"/>
</dbReference>
<gene>
    <name evidence="1" type="primary">thyA</name>
</gene>